<comment type="function">
    <text>This protein promotes the GTP-dependent binding of aminoacyl-tRNA to the A-site of ribosomes during protein biosynthesis.</text>
</comment>
<comment type="subcellular location">
    <subcellularLocation>
        <location>Cytoplasm</location>
    </subcellularLocation>
</comment>
<comment type="similarity">
    <text evidence="3">Belongs to the TRAFAC class translation factor GTPase superfamily. Classic translation factor GTPase family. EF-Tu/EF-1A subfamily.</text>
</comment>
<name>EF1A3_SCHPO</name>
<keyword id="KW-0963">Cytoplasm</keyword>
<keyword id="KW-0903">Direct protein sequencing</keyword>
<keyword id="KW-0251">Elongation factor</keyword>
<keyword id="KW-0342">GTP-binding</keyword>
<keyword id="KW-0488">Methylation</keyword>
<keyword id="KW-0547">Nucleotide-binding</keyword>
<keyword id="KW-0648">Protein biosynthesis</keyword>
<keyword id="KW-1185">Reference proteome</keyword>
<reference key="1">
    <citation type="journal article" date="1997" name="Gene">
        <title>Comprehensive cloning of Schizosaccharomyces pombe genes encoding translation elongation factors.</title>
        <authorList>
            <person name="Mita K."/>
            <person name="Morimyo M."/>
            <person name="Ito K."/>
            <person name="Sugaya K."/>
            <person name="Ebihara K."/>
            <person name="Hongo E."/>
            <person name="Higashi T."/>
            <person name="Hirayama Y."/>
            <person name="Nakamura Y."/>
        </authorList>
    </citation>
    <scope>NUCLEOTIDE SEQUENCE [MRNA]</scope>
    <source>
        <strain>972 / ATCC 24843</strain>
    </source>
</reference>
<reference key="2">
    <citation type="journal article" date="2002" name="Nature">
        <title>The genome sequence of Schizosaccharomyces pombe.</title>
        <authorList>
            <person name="Wood V."/>
            <person name="Gwilliam R."/>
            <person name="Rajandream M.A."/>
            <person name="Lyne M.H."/>
            <person name="Lyne R."/>
            <person name="Stewart A."/>
            <person name="Sgouros J.G."/>
            <person name="Peat N."/>
            <person name="Hayles J."/>
            <person name="Baker S.G."/>
            <person name="Basham D."/>
            <person name="Bowman S."/>
            <person name="Brooks K."/>
            <person name="Brown D."/>
            <person name="Brown S."/>
            <person name="Chillingworth T."/>
            <person name="Churcher C.M."/>
            <person name="Collins M."/>
            <person name="Connor R."/>
            <person name="Cronin A."/>
            <person name="Davis P."/>
            <person name="Feltwell T."/>
            <person name="Fraser A."/>
            <person name="Gentles S."/>
            <person name="Goble A."/>
            <person name="Hamlin N."/>
            <person name="Harris D.E."/>
            <person name="Hidalgo J."/>
            <person name="Hodgson G."/>
            <person name="Holroyd S."/>
            <person name="Hornsby T."/>
            <person name="Howarth S."/>
            <person name="Huckle E.J."/>
            <person name="Hunt S."/>
            <person name="Jagels K."/>
            <person name="James K.D."/>
            <person name="Jones L."/>
            <person name="Jones M."/>
            <person name="Leather S."/>
            <person name="McDonald S."/>
            <person name="McLean J."/>
            <person name="Mooney P."/>
            <person name="Moule S."/>
            <person name="Mungall K.L."/>
            <person name="Murphy L.D."/>
            <person name="Niblett D."/>
            <person name="Odell C."/>
            <person name="Oliver K."/>
            <person name="O'Neil S."/>
            <person name="Pearson D."/>
            <person name="Quail M.A."/>
            <person name="Rabbinowitsch E."/>
            <person name="Rutherford K.M."/>
            <person name="Rutter S."/>
            <person name="Saunders D."/>
            <person name="Seeger K."/>
            <person name="Sharp S."/>
            <person name="Skelton J."/>
            <person name="Simmonds M.N."/>
            <person name="Squares R."/>
            <person name="Squares S."/>
            <person name="Stevens K."/>
            <person name="Taylor K."/>
            <person name="Taylor R.G."/>
            <person name="Tivey A."/>
            <person name="Walsh S.V."/>
            <person name="Warren T."/>
            <person name="Whitehead S."/>
            <person name="Woodward J.R."/>
            <person name="Volckaert G."/>
            <person name="Aert R."/>
            <person name="Robben J."/>
            <person name="Grymonprez B."/>
            <person name="Weltjens I."/>
            <person name="Vanstreels E."/>
            <person name="Rieger M."/>
            <person name="Schaefer M."/>
            <person name="Mueller-Auer S."/>
            <person name="Gabel C."/>
            <person name="Fuchs M."/>
            <person name="Duesterhoeft A."/>
            <person name="Fritzc C."/>
            <person name="Holzer E."/>
            <person name="Moestl D."/>
            <person name="Hilbert H."/>
            <person name="Borzym K."/>
            <person name="Langer I."/>
            <person name="Beck A."/>
            <person name="Lehrach H."/>
            <person name="Reinhardt R."/>
            <person name="Pohl T.M."/>
            <person name="Eger P."/>
            <person name="Zimmermann W."/>
            <person name="Wedler H."/>
            <person name="Wambutt R."/>
            <person name="Purnelle B."/>
            <person name="Goffeau A."/>
            <person name="Cadieu E."/>
            <person name="Dreano S."/>
            <person name="Gloux S."/>
            <person name="Lelaure V."/>
            <person name="Mottier S."/>
            <person name="Galibert F."/>
            <person name="Aves S.J."/>
            <person name="Xiang Z."/>
            <person name="Hunt C."/>
            <person name="Moore K."/>
            <person name="Hurst S.M."/>
            <person name="Lucas M."/>
            <person name="Rochet M."/>
            <person name="Gaillardin C."/>
            <person name="Tallada V.A."/>
            <person name="Garzon A."/>
            <person name="Thode G."/>
            <person name="Daga R.R."/>
            <person name="Cruzado L."/>
            <person name="Jimenez J."/>
            <person name="Sanchez M."/>
            <person name="del Rey F."/>
            <person name="Benito J."/>
            <person name="Dominguez A."/>
            <person name="Revuelta J.L."/>
            <person name="Moreno S."/>
            <person name="Armstrong J."/>
            <person name="Forsburg S.L."/>
            <person name="Cerutti L."/>
            <person name="Lowe T."/>
            <person name="McCombie W.R."/>
            <person name="Paulsen I."/>
            <person name="Potashkin J."/>
            <person name="Shpakovski G.V."/>
            <person name="Ussery D."/>
            <person name="Barrell B.G."/>
            <person name="Nurse P."/>
        </authorList>
    </citation>
    <scope>NUCLEOTIDE SEQUENCE [LARGE SCALE GENOMIC DNA]</scope>
    <source>
        <strain>972 / ATCC 24843</strain>
    </source>
</reference>
<reference key="3">
    <citation type="journal article" date="1988" name="J. Biochem.">
        <title>Peptide elongation factor 1 from yeasts: purification and biochemical characterization of peptide elongation factors 1alpha and 1beta(gamma) from Saccharomyces carlsbergensis and Schizosaccharomyces pombe.</title>
        <authorList>
            <person name="Miyazaki M."/>
            <person name="Uritani M."/>
            <person name="Fujimura K."/>
            <person name="Yamakatsu H."/>
            <person name="Kageyama T."/>
            <person name="Takahashi K."/>
        </authorList>
    </citation>
    <scope>PROTEIN SEQUENCE OF 64-94</scope>
</reference>
<reference key="4">
    <citation type="submission" date="1997-04" db="EMBL/GenBank/DDBJ databases">
        <authorList>
            <person name="Jang Y.-J."/>
            <person name="Yoo H.-S."/>
        </authorList>
    </citation>
    <scope>NUCLEOTIDE SEQUENCE [MRNA] OF 326-460</scope>
    <source>
        <strain>972 / ATCC 24843</strain>
    </source>
</reference>
<sequence>MGKEKGHINVVVIGHVDSGKSTTTGHLIYKCGGIDKRTIEKFEKEATELGKGSFKYAWVLDKLKAERERGITIDIALWKFETPKYNVTVIDAPGHRDFIKNMITGTSQADCAILIIGGGTGEFEAGISKDGQTREHALLAYTLGVKQLIVAVNKMDTTGWSQARFEEIVKETSNFIKKVGFNPKTVPFVPVSGFQGDNMIEPTTNMPWYQGWQKETKAGVVKGKTLLEAIDSIEPPARPTDKPLRLPLQDVYKIGGIGTVPVGRVETGVIKPGMIVTFAPAGVTTEVKSVEMHHESLDAGLPGDNVGFNVKNVSVKDIRRGNVCGDSKNDPPMGCASFTAQVIILNHPGQISAGYSPVLDCHTAHIACKFAELIEKIDRRSGKKIEESPKFVKSGDACIAKMVPSKPMCVEAFTDYAPLGRFAVRDMRQTVAVGVIKAVEKVAPGAAKVTKAAVKAGAKK</sequence>
<organism>
    <name type="scientific">Schizosaccharomyces pombe (strain 972 / ATCC 24843)</name>
    <name type="common">Fission yeast</name>
    <dbReference type="NCBI Taxonomy" id="284812"/>
    <lineage>
        <taxon>Eukaryota</taxon>
        <taxon>Fungi</taxon>
        <taxon>Dikarya</taxon>
        <taxon>Ascomycota</taxon>
        <taxon>Taphrinomycotina</taxon>
        <taxon>Schizosaccharomycetes</taxon>
        <taxon>Schizosaccharomycetales</taxon>
        <taxon>Schizosaccharomycetaceae</taxon>
        <taxon>Schizosaccharomyces</taxon>
    </lineage>
</organism>
<accession>P0CT55</accession>
<accession>O14372</accession>
<accession>O14441</accession>
<accession>O59818</accession>
<accession>P50522</accession>
<accession>P78764</accession>
<accession>Q10117</accession>
<accession>Q10119</accession>
<accession>Q10158</accession>
<accession>Q7M4U9</accession>
<accession>Q7Z8V5</accession>
<dbReference type="EMBL" id="D82572">
    <property type="protein sequence ID" value="BAA11570.1"/>
    <property type="molecule type" value="mRNA"/>
</dbReference>
<dbReference type="EMBL" id="CU329671">
    <property type="protein sequence ID" value="CAB46708.1"/>
    <property type="molecule type" value="Genomic_DNA"/>
</dbReference>
<dbReference type="EMBL" id="U97366">
    <property type="protein sequence ID" value="AAB63858.1"/>
    <property type="molecule type" value="mRNA"/>
</dbReference>
<dbReference type="PIR" id="B41453">
    <property type="entry name" value="B41453"/>
</dbReference>
<dbReference type="PIR" id="T38230">
    <property type="entry name" value="T38230"/>
</dbReference>
<dbReference type="PIR" id="T42089">
    <property type="entry name" value="T42089"/>
</dbReference>
<dbReference type="RefSeq" id="NP_595255.1">
    <property type="nucleotide sequence ID" value="NM_001021161.2"/>
</dbReference>
<dbReference type="SMR" id="P0CT55"/>
<dbReference type="FunCoup" id="P0CT55">
    <property type="interactions" value="400"/>
</dbReference>
<dbReference type="STRING" id="284812.P0CT55"/>
<dbReference type="iPTMnet" id="P0CT55"/>
<dbReference type="EnsemblFungi" id="SPAC23A1.10.1">
    <property type="protein sequence ID" value="SPAC23A1.10.1:pep"/>
    <property type="gene ID" value="SPAC23A1.10"/>
</dbReference>
<dbReference type="EnsemblFungi" id="SPBC839.15c.1">
    <property type="protein sequence ID" value="SPBC839.15c.1:pep"/>
    <property type="gene ID" value="SPBC839.15c"/>
</dbReference>
<dbReference type="GeneID" id="2539917"/>
<dbReference type="KEGG" id="spo:2539917"/>
<dbReference type="KEGG" id="spo:2541984"/>
<dbReference type="PomBase" id="SPBC839.15c">
    <property type="gene designation" value="tef103"/>
</dbReference>
<dbReference type="VEuPathDB" id="FungiDB:SPAC23A1.10"/>
<dbReference type="VEuPathDB" id="FungiDB:SPBC839.15c"/>
<dbReference type="InParanoid" id="P0CT55"/>
<dbReference type="OMA" id="AIRDMGM"/>
<dbReference type="PhylomeDB" id="P0CT55"/>
<dbReference type="Reactome" id="R-SPO-156842">
    <property type="pathway name" value="Eukaryotic Translation Elongation"/>
</dbReference>
<dbReference type="Reactome" id="R-SPO-3371511">
    <property type="pathway name" value="HSF1 activation"/>
</dbReference>
<dbReference type="Reactome" id="R-SPO-6798695">
    <property type="pathway name" value="Neutrophil degranulation"/>
</dbReference>
<dbReference type="Reactome" id="R-SPO-8876725">
    <property type="pathway name" value="Protein methylation"/>
</dbReference>
<dbReference type="PRO" id="PR:P0CT55"/>
<dbReference type="Proteomes" id="UP000002485">
    <property type="component" value="Chromosome II"/>
</dbReference>
<dbReference type="GO" id="GO:0005853">
    <property type="term" value="C:eukaryotic translation elongation factor 1 complex"/>
    <property type="evidence" value="ECO:0000266"/>
    <property type="project" value="PomBase"/>
</dbReference>
<dbReference type="GO" id="GO:0005516">
    <property type="term" value="F:calmodulin binding"/>
    <property type="evidence" value="ECO:0000314"/>
    <property type="project" value="PomBase"/>
</dbReference>
<dbReference type="GO" id="GO:0005525">
    <property type="term" value="F:GTP binding"/>
    <property type="evidence" value="ECO:0007669"/>
    <property type="project" value="UniProtKB-KW"/>
</dbReference>
<dbReference type="GO" id="GO:0003924">
    <property type="term" value="F:GTPase activity"/>
    <property type="evidence" value="ECO:0000318"/>
    <property type="project" value="GO_Central"/>
</dbReference>
<dbReference type="GO" id="GO:0003746">
    <property type="term" value="F:translation elongation factor activity"/>
    <property type="evidence" value="ECO:0000318"/>
    <property type="project" value="GO_Central"/>
</dbReference>
<dbReference type="GO" id="GO:0002182">
    <property type="term" value="P:cytoplasmic translational elongation"/>
    <property type="evidence" value="ECO:0000314"/>
    <property type="project" value="PomBase"/>
</dbReference>
<dbReference type="GO" id="GO:0006412">
    <property type="term" value="P:translation"/>
    <property type="evidence" value="ECO:0000318"/>
    <property type="project" value="GO_Central"/>
</dbReference>
<dbReference type="GO" id="GO:0006414">
    <property type="term" value="P:translational elongation"/>
    <property type="evidence" value="ECO:0000318"/>
    <property type="project" value="GO_Central"/>
</dbReference>
<dbReference type="CDD" id="cd01883">
    <property type="entry name" value="EF1_alpha"/>
    <property type="match status" value="1"/>
</dbReference>
<dbReference type="CDD" id="cd03693">
    <property type="entry name" value="EF1_alpha_II"/>
    <property type="match status" value="1"/>
</dbReference>
<dbReference type="CDD" id="cd03705">
    <property type="entry name" value="EF1_alpha_III"/>
    <property type="match status" value="1"/>
</dbReference>
<dbReference type="FunFam" id="2.40.30.10:FF:000003">
    <property type="entry name" value="Elongation factor 1-alpha"/>
    <property type="match status" value="1"/>
</dbReference>
<dbReference type="FunFam" id="2.40.30.10:FF:000005">
    <property type="entry name" value="Elongation factor 1-alpha"/>
    <property type="match status" value="1"/>
</dbReference>
<dbReference type="FunFam" id="3.40.50.300:FF:000211">
    <property type="entry name" value="Elongation factor 1-alpha"/>
    <property type="match status" value="1"/>
</dbReference>
<dbReference type="Gene3D" id="3.40.50.300">
    <property type="entry name" value="P-loop containing nucleotide triphosphate hydrolases"/>
    <property type="match status" value="1"/>
</dbReference>
<dbReference type="Gene3D" id="2.40.30.10">
    <property type="entry name" value="Translation factors"/>
    <property type="match status" value="2"/>
</dbReference>
<dbReference type="HAMAP" id="MF_00118_A">
    <property type="entry name" value="EF_Tu_A"/>
    <property type="match status" value="1"/>
</dbReference>
<dbReference type="InterPro" id="IPR004161">
    <property type="entry name" value="EFTu-like_2"/>
</dbReference>
<dbReference type="InterPro" id="IPR031157">
    <property type="entry name" value="G_TR_CS"/>
</dbReference>
<dbReference type="InterPro" id="IPR054696">
    <property type="entry name" value="GTP-eEF1A_C"/>
</dbReference>
<dbReference type="InterPro" id="IPR027417">
    <property type="entry name" value="P-loop_NTPase"/>
</dbReference>
<dbReference type="InterPro" id="IPR000795">
    <property type="entry name" value="T_Tr_GTP-bd_dom"/>
</dbReference>
<dbReference type="InterPro" id="IPR050100">
    <property type="entry name" value="TRAFAC_GTPase_members"/>
</dbReference>
<dbReference type="InterPro" id="IPR009000">
    <property type="entry name" value="Transl_B-barrel_sf"/>
</dbReference>
<dbReference type="InterPro" id="IPR009001">
    <property type="entry name" value="Transl_elong_EF1A/Init_IF2_C"/>
</dbReference>
<dbReference type="InterPro" id="IPR004539">
    <property type="entry name" value="Transl_elong_EF1A_euk/arc"/>
</dbReference>
<dbReference type="NCBIfam" id="TIGR00483">
    <property type="entry name" value="EF-1_alpha"/>
    <property type="match status" value="1"/>
</dbReference>
<dbReference type="NCBIfam" id="NF008969">
    <property type="entry name" value="PRK12317.1"/>
    <property type="match status" value="1"/>
</dbReference>
<dbReference type="PANTHER" id="PTHR23115">
    <property type="entry name" value="TRANSLATION FACTOR"/>
    <property type="match status" value="1"/>
</dbReference>
<dbReference type="Pfam" id="PF22594">
    <property type="entry name" value="GTP-eEF1A_C"/>
    <property type="match status" value="1"/>
</dbReference>
<dbReference type="Pfam" id="PF00009">
    <property type="entry name" value="GTP_EFTU"/>
    <property type="match status" value="1"/>
</dbReference>
<dbReference type="Pfam" id="PF03144">
    <property type="entry name" value="GTP_EFTU_D2"/>
    <property type="match status" value="1"/>
</dbReference>
<dbReference type="PRINTS" id="PR00315">
    <property type="entry name" value="ELONGATNFCT"/>
</dbReference>
<dbReference type="SUPFAM" id="SSF50465">
    <property type="entry name" value="EF-Tu/eEF-1alpha/eIF2-gamma C-terminal domain"/>
    <property type="match status" value="1"/>
</dbReference>
<dbReference type="SUPFAM" id="SSF52540">
    <property type="entry name" value="P-loop containing nucleoside triphosphate hydrolases"/>
    <property type="match status" value="1"/>
</dbReference>
<dbReference type="SUPFAM" id="SSF50447">
    <property type="entry name" value="Translation proteins"/>
    <property type="match status" value="1"/>
</dbReference>
<dbReference type="PROSITE" id="PS00301">
    <property type="entry name" value="G_TR_1"/>
    <property type="match status" value="1"/>
</dbReference>
<dbReference type="PROSITE" id="PS51722">
    <property type="entry name" value="G_TR_2"/>
    <property type="match status" value="1"/>
</dbReference>
<gene>
    <name type="primary">tef103</name>
    <name type="synonym">ef1a-c</name>
    <name type="synonym">tef1c</name>
    <name type="synonym">tef1d</name>
    <name type="ORF">SPBC24E9.15c</name>
    <name type="ORF">SPBC839.15c</name>
</gene>
<feature type="initiator methionine" description="Removed" evidence="2">
    <location>
        <position position="1"/>
    </location>
</feature>
<feature type="chain" id="PRO_0000433409" description="Elongation factor 1-alpha-B/C">
    <location>
        <begin position="2"/>
        <end position="460"/>
    </location>
</feature>
<feature type="domain" description="tr-type G">
    <location>
        <begin position="5"/>
        <end position="240"/>
    </location>
</feature>
<feature type="region of interest" description="G1" evidence="1">
    <location>
        <begin position="14"/>
        <end position="21"/>
    </location>
</feature>
<feature type="region of interest" description="G2" evidence="1">
    <location>
        <begin position="70"/>
        <end position="74"/>
    </location>
</feature>
<feature type="region of interest" description="G3" evidence="1">
    <location>
        <begin position="91"/>
        <end position="94"/>
    </location>
</feature>
<feature type="region of interest" description="G4" evidence="1">
    <location>
        <begin position="153"/>
        <end position="156"/>
    </location>
</feature>
<feature type="region of interest" description="G5" evidence="1">
    <location>
        <begin position="192"/>
        <end position="194"/>
    </location>
</feature>
<feature type="binding site" evidence="1">
    <location>
        <begin position="14"/>
        <end position="21"/>
    </location>
    <ligand>
        <name>GTP</name>
        <dbReference type="ChEBI" id="CHEBI:37565"/>
    </ligand>
</feature>
<feature type="binding site" evidence="1">
    <location>
        <begin position="91"/>
        <end position="95"/>
    </location>
    <ligand>
        <name>GTP</name>
        <dbReference type="ChEBI" id="CHEBI:37565"/>
    </ligand>
</feature>
<feature type="binding site" evidence="1">
    <location>
        <begin position="153"/>
        <end position="156"/>
    </location>
    <ligand>
        <name>GTP</name>
        <dbReference type="ChEBI" id="CHEBI:37565"/>
    </ligand>
</feature>
<feature type="modified residue" description="N,N,N-trimethylglycine" evidence="2">
    <location>
        <position position="2"/>
    </location>
</feature>
<feature type="modified residue" description="N6,N6-dimethyllysine; alternate" evidence="2">
    <location>
        <position position="3"/>
    </location>
</feature>
<feature type="modified residue" description="N6-methyllysine; alternate" evidence="2">
    <location>
        <position position="3"/>
    </location>
</feature>
<feature type="modified residue" description="N6-methyllysine" evidence="2">
    <location>
        <position position="30"/>
    </location>
</feature>
<feature type="modified residue" description="N6,N6,N6-trimethyllysine" evidence="2">
    <location>
        <position position="79"/>
    </location>
</feature>
<feature type="modified residue" description="N6,N6-dimethyllysine; alternate" evidence="2">
    <location>
        <position position="316"/>
    </location>
</feature>
<feature type="modified residue" description="N6-methyllysine; alternate" evidence="2">
    <location>
        <position position="316"/>
    </location>
</feature>
<feature type="modified residue" description="N6-methyllysine" evidence="2">
    <location>
        <position position="390"/>
    </location>
</feature>
<feature type="sequence conflict" description="In Ref. 4; AAB63858." evidence="1" ref="4">
    <original>A</original>
    <variation>S</variation>
    <location>
        <position position="412"/>
    </location>
</feature>
<feature type="sequence conflict" description="In Ref. 4; AAB63858." evidence="1" ref="4">
    <original>Y</original>
    <variation>YV</variation>
    <location>
        <position position="416"/>
    </location>
</feature>
<protein>
    <recommendedName>
        <fullName>Elongation factor 1-alpha-B/C</fullName>
        <shortName>EF-1-alpha-B/C</shortName>
    </recommendedName>
</protein>
<proteinExistence type="evidence at protein level"/>
<evidence type="ECO:0000250" key="1"/>
<evidence type="ECO:0000250" key="2">
    <source>
        <dbReference type="UniProtKB" id="P02994"/>
    </source>
</evidence>
<evidence type="ECO:0000305" key="3"/>